<dbReference type="EMBL" id="CP001601">
    <property type="protein sequence ID" value="ACP33122.1"/>
    <property type="molecule type" value="Genomic_DNA"/>
</dbReference>
<dbReference type="RefSeq" id="WP_010190331.1">
    <property type="nucleotide sequence ID" value="NC_012590.1"/>
</dbReference>
<dbReference type="SMR" id="C3PH18"/>
<dbReference type="STRING" id="548476.cauri_1529"/>
<dbReference type="GeneID" id="31924159"/>
<dbReference type="KEGG" id="car:cauri_1529"/>
<dbReference type="eggNOG" id="COG0858">
    <property type="taxonomic scope" value="Bacteria"/>
</dbReference>
<dbReference type="HOGENOM" id="CLU_089475_0_0_11"/>
<dbReference type="OrthoDB" id="307788at2"/>
<dbReference type="Proteomes" id="UP000002077">
    <property type="component" value="Chromosome"/>
</dbReference>
<dbReference type="GO" id="GO:0005829">
    <property type="term" value="C:cytosol"/>
    <property type="evidence" value="ECO:0007669"/>
    <property type="project" value="TreeGrafter"/>
</dbReference>
<dbReference type="GO" id="GO:0043024">
    <property type="term" value="F:ribosomal small subunit binding"/>
    <property type="evidence" value="ECO:0007669"/>
    <property type="project" value="TreeGrafter"/>
</dbReference>
<dbReference type="GO" id="GO:0030490">
    <property type="term" value="P:maturation of SSU-rRNA"/>
    <property type="evidence" value="ECO:0007669"/>
    <property type="project" value="UniProtKB-UniRule"/>
</dbReference>
<dbReference type="Gene3D" id="3.30.300.20">
    <property type="match status" value="1"/>
</dbReference>
<dbReference type="HAMAP" id="MF_00003">
    <property type="entry name" value="RbfA"/>
    <property type="match status" value="1"/>
</dbReference>
<dbReference type="InterPro" id="IPR015946">
    <property type="entry name" value="KH_dom-like_a/b"/>
</dbReference>
<dbReference type="InterPro" id="IPR000238">
    <property type="entry name" value="RbfA"/>
</dbReference>
<dbReference type="InterPro" id="IPR023799">
    <property type="entry name" value="RbfA_dom_sf"/>
</dbReference>
<dbReference type="InterPro" id="IPR020053">
    <property type="entry name" value="Ribosome-bd_factorA_CS"/>
</dbReference>
<dbReference type="NCBIfam" id="TIGR00082">
    <property type="entry name" value="rbfA"/>
    <property type="match status" value="1"/>
</dbReference>
<dbReference type="PANTHER" id="PTHR33515">
    <property type="entry name" value="RIBOSOME-BINDING FACTOR A, CHLOROPLASTIC-RELATED"/>
    <property type="match status" value="1"/>
</dbReference>
<dbReference type="PANTHER" id="PTHR33515:SF1">
    <property type="entry name" value="RIBOSOME-BINDING FACTOR A, CHLOROPLASTIC-RELATED"/>
    <property type="match status" value="1"/>
</dbReference>
<dbReference type="Pfam" id="PF02033">
    <property type="entry name" value="RBFA"/>
    <property type="match status" value="1"/>
</dbReference>
<dbReference type="SUPFAM" id="SSF89919">
    <property type="entry name" value="Ribosome-binding factor A, RbfA"/>
    <property type="match status" value="1"/>
</dbReference>
<dbReference type="PROSITE" id="PS01319">
    <property type="entry name" value="RBFA"/>
    <property type="match status" value="1"/>
</dbReference>
<comment type="function">
    <text evidence="1">One of several proteins that assist in the late maturation steps of the functional core of the 30S ribosomal subunit. Associates with free 30S ribosomal subunits (but not with 30S subunits that are part of 70S ribosomes or polysomes). Required for efficient processing of 16S rRNA. May interact with the 5'-terminal helix region of 16S rRNA.</text>
</comment>
<comment type="subunit">
    <text evidence="1">Monomer. Binds 30S ribosomal subunits, but not 50S ribosomal subunits or 70S ribosomes.</text>
</comment>
<comment type="subcellular location">
    <subcellularLocation>
        <location evidence="1">Cytoplasm</location>
    </subcellularLocation>
</comment>
<comment type="similarity">
    <text evidence="1">Belongs to the RbfA family.</text>
</comment>
<feature type="chain" id="PRO_1000193245" description="Ribosome-binding factor A">
    <location>
        <begin position="1"/>
        <end position="147"/>
    </location>
</feature>
<feature type="region of interest" description="Disordered" evidence="2">
    <location>
        <begin position="123"/>
        <end position="147"/>
    </location>
</feature>
<protein>
    <recommendedName>
        <fullName evidence="1">Ribosome-binding factor A</fullName>
    </recommendedName>
</protein>
<sequence>MVDHARAARMAKRIQTIVASAIERQIKDRRLELVTITDARVTGDLHDATVFYTVRGTDIGTEPDYDQAAEALTRAKGQLRKIVGDELSVRFTPTLSFELDTVPEASAHMEELLARARARDAELAKLKEGAQPAGDANPYKTSDEEED</sequence>
<accession>C3PH18</accession>
<evidence type="ECO:0000255" key="1">
    <source>
        <dbReference type="HAMAP-Rule" id="MF_00003"/>
    </source>
</evidence>
<evidence type="ECO:0000256" key="2">
    <source>
        <dbReference type="SAM" id="MobiDB-lite"/>
    </source>
</evidence>
<name>RBFA_CORA7</name>
<keyword id="KW-0963">Cytoplasm</keyword>
<keyword id="KW-1185">Reference proteome</keyword>
<keyword id="KW-0690">Ribosome biogenesis</keyword>
<proteinExistence type="inferred from homology"/>
<gene>
    <name evidence="1" type="primary">rbfA</name>
    <name type="ordered locus">cauri_1529</name>
</gene>
<organism>
    <name type="scientific">Corynebacterium aurimucosum (strain ATCC 700975 / DSM 44827 / CIP 107346 / CN-1)</name>
    <name type="common">Corynebacterium nigricans</name>
    <dbReference type="NCBI Taxonomy" id="548476"/>
    <lineage>
        <taxon>Bacteria</taxon>
        <taxon>Bacillati</taxon>
        <taxon>Actinomycetota</taxon>
        <taxon>Actinomycetes</taxon>
        <taxon>Mycobacteriales</taxon>
        <taxon>Corynebacteriaceae</taxon>
        <taxon>Corynebacterium</taxon>
    </lineage>
</organism>
<reference key="1">
    <citation type="journal article" date="2010" name="BMC Genomics">
        <title>Complete genome sequence and lifestyle of black-pigmented Corynebacterium aurimucosum ATCC 700975 (formerly C. nigricans CN-1) isolated from a vaginal swab of a woman with spontaneous abortion.</title>
        <authorList>
            <person name="Trost E."/>
            <person name="Gotker S."/>
            <person name="Schneider J."/>
            <person name="Schneiker-Bekel S."/>
            <person name="Szczepanowski R."/>
            <person name="Tilker A."/>
            <person name="Viehoever P."/>
            <person name="Arnold W."/>
            <person name="Bekel T."/>
            <person name="Blom J."/>
            <person name="Gartemann K.H."/>
            <person name="Linke B."/>
            <person name="Goesmann A."/>
            <person name="Puhler A."/>
            <person name="Shukla S.K."/>
            <person name="Tauch A."/>
        </authorList>
    </citation>
    <scope>NUCLEOTIDE SEQUENCE [LARGE SCALE GENOMIC DNA]</scope>
    <source>
        <strain>ATCC 700975 / DSM 44827 / CIP 107346 / CN-1</strain>
    </source>
</reference>